<gene>
    <name evidence="1" type="primary">rnhB</name>
    <name type="ordered locus">BT9727_3578</name>
</gene>
<reference key="1">
    <citation type="journal article" date="2006" name="J. Bacteriol.">
        <title>Pathogenomic sequence analysis of Bacillus cereus and Bacillus thuringiensis isolates closely related to Bacillus anthracis.</title>
        <authorList>
            <person name="Han C.S."/>
            <person name="Xie G."/>
            <person name="Challacombe J.F."/>
            <person name="Altherr M.R."/>
            <person name="Bhotika S.S."/>
            <person name="Bruce D."/>
            <person name="Campbell C.S."/>
            <person name="Campbell M.L."/>
            <person name="Chen J."/>
            <person name="Chertkov O."/>
            <person name="Cleland C."/>
            <person name="Dimitrijevic M."/>
            <person name="Doggett N.A."/>
            <person name="Fawcett J.J."/>
            <person name="Glavina T."/>
            <person name="Goodwin L.A."/>
            <person name="Hill K.K."/>
            <person name="Hitchcock P."/>
            <person name="Jackson P.J."/>
            <person name="Keim P."/>
            <person name="Kewalramani A.R."/>
            <person name="Longmire J."/>
            <person name="Lucas S."/>
            <person name="Malfatti S."/>
            <person name="McMurry K."/>
            <person name="Meincke L.J."/>
            <person name="Misra M."/>
            <person name="Moseman B.L."/>
            <person name="Mundt M."/>
            <person name="Munk A.C."/>
            <person name="Okinaka R.T."/>
            <person name="Parson-Quintana B."/>
            <person name="Reilly L.P."/>
            <person name="Richardson P."/>
            <person name="Robinson D.L."/>
            <person name="Rubin E."/>
            <person name="Saunders E."/>
            <person name="Tapia R."/>
            <person name="Tesmer J.G."/>
            <person name="Thayer N."/>
            <person name="Thompson L.S."/>
            <person name="Tice H."/>
            <person name="Ticknor L.O."/>
            <person name="Wills P.L."/>
            <person name="Brettin T.S."/>
            <person name="Gilna P."/>
        </authorList>
    </citation>
    <scope>NUCLEOTIDE SEQUENCE [LARGE SCALE GENOMIC DNA]</scope>
    <source>
        <strain>97-27</strain>
    </source>
</reference>
<accession>Q6HEX8</accession>
<protein>
    <recommendedName>
        <fullName evidence="1">Ribonuclease HII</fullName>
        <shortName evidence="1">RNase HII</shortName>
        <ecNumber evidence="1">3.1.26.4</ecNumber>
    </recommendedName>
</protein>
<name>RNH2_BACHK</name>
<comment type="function">
    <text evidence="1">Endonuclease that specifically degrades the RNA of RNA-DNA hybrids.</text>
</comment>
<comment type="catalytic activity">
    <reaction evidence="1">
        <text>Endonucleolytic cleavage to 5'-phosphomonoester.</text>
        <dbReference type="EC" id="3.1.26.4"/>
    </reaction>
</comment>
<comment type="cofactor">
    <cofactor evidence="1">
        <name>Mn(2+)</name>
        <dbReference type="ChEBI" id="CHEBI:29035"/>
    </cofactor>
    <cofactor evidence="1">
        <name>Mg(2+)</name>
        <dbReference type="ChEBI" id="CHEBI:18420"/>
    </cofactor>
    <text evidence="1">Manganese or magnesium. Binds 1 divalent metal ion per monomer in the absence of substrate. May bind a second metal ion after substrate binding.</text>
</comment>
<comment type="subcellular location">
    <subcellularLocation>
        <location evidence="1">Cytoplasm</location>
    </subcellularLocation>
</comment>
<comment type="similarity">
    <text evidence="1">Belongs to the RNase HII family.</text>
</comment>
<sequence length="257" mass="28949">MQKVTIQEAEHLLQEIMSEEDDRFQILIKDERKGVQKLILKWYKQKELAQKEKEKFLEMSKYENALREKGLTYIAGIDEVGRGPLAGPVVTAAVILPEDFYIPGLNDSKKLSEAKRERFYGEIKAKAIAIGVGIVSPQVIDEINIYQATKQAMLDAIANLSCTPEYLLIDAMKLPTPIPQTSIIKGDAKSISISAASIIAKVTRDRMMKELGEKYPAYGFEQHMGYGTKQHLEAIEAHGVLEEHRKSFAPIKDMIQK</sequence>
<feature type="chain" id="PRO_0000111539" description="Ribonuclease HII">
    <location>
        <begin position="1"/>
        <end position="257"/>
    </location>
</feature>
<feature type="domain" description="RNase H type-2" evidence="2">
    <location>
        <begin position="72"/>
        <end position="257"/>
    </location>
</feature>
<feature type="binding site" evidence="1">
    <location>
        <position position="78"/>
    </location>
    <ligand>
        <name>a divalent metal cation</name>
        <dbReference type="ChEBI" id="CHEBI:60240"/>
    </ligand>
</feature>
<feature type="binding site" evidence="1">
    <location>
        <position position="79"/>
    </location>
    <ligand>
        <name>a divalent metal cation</name>
        <dbReference type="ChEBI" id="CHEBI:60240"/>
    </ligand>
</feature>
<feature type="binding site" evidence="1">
    <location>
        <position position="170"/>
    </location>
    <ligand>
        <name>a divalent metal cation</name>
        <dbReference type="ChEBI" id="CHEBI:60240"/>
    </ligand>
</feature>
<organism>
    <name type="scientific">Bacillus thuringiensis subsp. konkukian (strain 97-27)</name>
    <dbReference type="NCBI Taxonomy" id="281309"/>
    <lineage>
        <taxon>Bacteria</taxon>
        <taxon>Bacillati</taxon>
        <taxon>Bacillota</taxon>
        <taxon>Bacilli</taxon>
        <taxon>Bacillales</taxon>
        <taxon>Bacillaceae</taxon>
        <taxon>Bacillus</taxon>
        <taxon>Bacillus cereus group</taxon>
    </lineage>
</organism>
<keyword id="KW-0963">Cytoplasm</keyword>
<keyword id="KW-0255">Endonuclease</keyword>
<keyword id="KW-0378">Hydrolase</keyword>
<keyword id="KW-0464">Manganese</keyword>
<keyword id="KW-0479">Metal-binding</keyword>
<keyword id="KW-0540">Nuclease</keyword>
<proteinExistence type="inferred from homology"/>
<evidence type="ECO:0000255" key="1">
    <source>
        <dbReference type="HAMAP-Rule" id="MF_00052"/>
    </source>
</evidence>
<evidence type="ECO:0000255" key="2">
    <source>
        <dbReference type="PROSITE-ProRule" id="PRU01319"/>
    </source>
</evidence>
<dbReference type="EC" id="3.1.26.4" evidence="1"/>
<dbReference type="EMBL" id="AE017355">
    <property type="protein sequence ID" value="AAT60608.1"/>
    <property type="molecule type" value="Genomic_DNA"/>
</dbReference>
<dbReference type="RefSeq" id="WP_001174721.1">
    <property type="nucleotide sequence ID" value="NC_005957.1"/>
</dbReference>
<dbReference type="RefSeq" id="YP_037898.1">
    <property type="nucleotide sequence ID" value="NC_005957.1"/>
</dbReference>
<dbReference type="SMR" id="Q6HEX8"/>
<dbReference type="KEGG" id="btk:BT9727_3578"/>
<dbReference type="PATRIC" id="fig|281309.8.peg.3816"/>
<dbReference type="HOGENOM" id="CLU_036532_2_1_9"/>
<dbReference type="Proteomes" id="UP000001301">
    <property type="component" value="Chromosome"/>
</dbReference>
<dbReference type="GO" id="GO:0005737">
    <property type="term" value="C:cytoplasm"/>
    <property type="evidence" value="ECO:0007669"/>
    <property type="project" value="UniProtKB-SubCell"/>
</dbReference>
<dbReference type="GO" id="GO:0032299">
    <property type="term" value="C:ribonuclease H2 complex"/>
    <property type="evidence" value="ECO:0007669"/>
    <property type="project" value="TreeGrafter"/>
</dbReference>
<dbReference type="GO" id="GO:0030145">
    <property type="term" value="F:manganese ion binding"/>
    <property type="evidence" value="ECO:0007669"/>
    <property type="project" value="UniProtKB-UniRule"/>
</dbReference>
<dbReference type="GO" id="GO:0003723">
    <property type="term" value="F:RNA binding"/>
    <property type="evidence" value="ECO:0007669"/>
    <property type="project" value="InterPro"/>
</dbReference>
<dbReference type="GO" id="GO:0004523">
    <property type="term" value="F:RNA-DNA hybrid ribonuclease activity"/>
    <property type="evidence" value="ECO:0007669"/>
    <property type="project" value="UniProtKB-UniRule"/>
</dbReference>
<dbReference type="GO" id="GO:0043137">
    <property type="term" value="P:DNA replication, removal of RNA primer"/>
    <property type="evidence" value="ECO:0007669"/>
    <property type="project" value="TreeGrafter"/>
</dbReference>
<dbReference type="GO" id="GO:0006298">
    <property type="term" value="P:mismatch repair"/>
    <property type="evidence" value="ECO:0007669"/>
    <property type="project" value="TreeGrafter"/>
</dbReference>
<dbReference type="CDD" id="cd07182">
    <property type="entry name" value="RNase_HII_bacteria_HII_like"/>
    <property type="match status" value="1"/>
</dbReference>
<dbReference type="FunFam" id="3.30.420.10:FF:000006">
    <property type="entry name" value="Ribonuclease HII"/>
    <property type="match status" value="1"/>
</dbReference>
<dbReference type="Gene3D" id="3.30.420.10">
    <property type="entry name" value="Ribonuclease H-like superfamily/Ribonuclease H"/>
    <property type="match status" value="1"/>
</dbReference>
<dbReference type="HAMAP" id="MF_00052_B">
    <property type="entry name" value="RNase_HII_B"/>
    <property type="match status" value="1"/>
</dbReference>
<dbReference type="InterPro" id="IPR022898">
    <property type="entry name" value="RNase_HII"/>
</dbReference>
<dbReference type="InterPro" id="IPR001352">
    <property type="entry name" value="RNase_HII/HIII"/>
</dbReference>
<dbReference type="InterPro" id="IPR024567">
    <property type="entry name" value="RNase_HII/HIII_dom"/>
</dbReference>
<dbReference type="InterPro" id="IPR012337">
    <property type="entry name" value="RNaseH-like_sf"/>
</dbReference>
<dbReference type="InterPro" id="IPR036397">
    <property type="entry name" value="RNaseH_sf"/>
</dbReference>
<dbReference type="NCBIfam" id="NF000594">
    <property type="entry name" value="PRK00015.1-1"/>
    <property type="match status" value="1"/>
</dbReference>
<dbReference type="NCBIfam" id="NF000595">
    <property type="entry name" value="PRK00015.1-3"/>
    <property type="match status" value="1"/>
</dbReference>
<dbReference type="PANTHER" id="PTHR10954">
    <property type="entry name" value="RIBONUCLEASE H2 SUBUNIT A"/>
    <property type="match status" value="1"/>
</dbReference>
<dbReference type="PANTHER" id="PTHR10954:SF18">
    <property type="entry name" value="RIBONUCLEASE HII"/>
    <property type="match status" value="1"/>
</dbReference>
<dbReference type="Pfam" id="PF01351">
    <property type="entry name" value="RNase_HII"/>
    <property type="match status" value="1"/>
</dbReference>
<dbReference type="SUPFAM" id="SSF53098">
    <property type="entry name" value="Ribonuclease H-like"/>
    <property type="match status" value="1"/>
</dbReference>
<dbReference type="PROSITE" id="PS51975">
    <property type="entry name" value="RNASE_H_2"/>
    <property type="match status" value="1"/>
</dbReference>